<dbReference type="EC" id="2.6.1.-" evidence="3 4"/>
<dbReference type="EMBL" id="X73124">
    <property type="protein sequence ID" value="CAA51641.1"/>
    <property type="molecule type" value="Genomic_DNA"/>
</dbReference>
<dbReference type="EMBL" id="AL009126">
    <property type="protein sequence ID" value="CAB15796.1"/>
    <property type="molecule type" value="Genomic_DNA"/>
</dbReference>
<dbReference type="PIR" id="S39740">
    <property type="entry name" value="S39740"/>
</dbReference>
<dbReference type="RefSeq" id="NP_391649.1">
    <property type="nucleotide sequence ID" value="NC_000964.3"/>
</dbReference>
<dbReference type="RefSeq" id="WP_003242568.1">
    <property type="nucleotide sequence ID" value="NZ_OZ025638.1"/>
</dbReference>
<dbReference type="PDB" id="6L1L">
    <property type="method" value="X-ray"/>
    <property type="resolution" value="1.90 A"/>
    <property type="chains" value="A/B=1-399"/>
</dbReference>
<dbReference type="PDB" id="6L1N">
    <property type="method" value="X-ray"/>
    <property type="resolution" value="2.00 A"/>
    <property type="chains" value="A/B=1-399"/>
</dbReference>
<dbReference type="PDB" id="6L1O">
    <property type="method" value="X-ray"/>
    <property type="resolution" value="1.90 A"/>
    <property type="chains" value="A/B=1-399"/>
</dbReference>
<dbReference type="PDBsum" id="6L1L"/>
<dbReference type="PDBsum" id="6L1N"/>
<dbReference type="PDBsum" id="6L1O"/>
<dbReference type="SMR" id="P39643"/>
<dbReference type="FunCoup" id="P39643">
    <property type="interactions" value="79"/>
</dbReference>
<dbReference type="STRING" id="224308.BSU37690"/>
<dbReference type="PaxDb" id="224308-BSU37690"/>
<dbReference type="EnsemblBacteria" id="CAB15796">
    <property type="protein sequence ID" value="CAB15796"/>
    <property type="gene ID" value="BSU_37690"/>
</dbReference>
<dbReference type="GeneID" id="937157"/>
<dbReference type="KEGG" id="bsu:BSU37690"/>
<dbReference type="PATRIC" id="fig|224308.179.peg.4081"/>
<dbReference type="eggNOG" id="COG0436">
    <property type="taxonomic scope" value="Bacteria"/>
</dbReference>
<dbReference type="InParanoid" id="P39643"/>
<dbReference type="OrthoDB" id="9802328at2"/>
<dbReference type="PhylomeDB" id="P39643"/>
<dbReference type="BioCyc" id="BSUB:BSU37690-MONOMER"/>
<dbReference type="BioCyc" id="MetaCyc:MONOMER-19128"/>
<dbReference type="UniPathway" id="UPA00100"/>
<dbReference type="Proteomes" id="UP000001570">
    <property type="component" value="Chromosome"/>
</dbReference>
<dbReference type="GO" id="GO:0005737">
    <property type="term" value="C:cytoplasm"/>
    <property type="evidence" value="ECO:0007669"/>
    <property type="project" value="UniProtKB-SubCell"/>
</dbReference>
<dbReference type="GO" id="GO:0030170">
    <property type="term" value="F:pyridoxal phosphate binding"/>
    <property type="evidence" value="ECO:0007669"/>
    <property type="project" value="InterPro"/>
</dbReference>
<dbReference type="GO" id="GO:0008483">
    <property type="term" value="F:transaminase activity"/>
    <property type="evidence" value="ECO:0000314"/>
    <property type="project" value="UniProtKB"/>
</dbReference>
<dbReference type="GO" id="GO:0017000">
    <property type="term" value="P:antibiotic biosynthetic process"/>
    <property type="evidence" value="ECO:0000314"/>
    <property type="project" value="UniProtKB"/>
</dbReference>
<dbReference type="CDD" id="cd00609">
    <property type="entry name" value="AAT_like"/>
    <property type="match status" value="1"/>
</dbReference>
<dbReference type="FunFam" id="3.40.640.10:FF:000218">
    <property type="entry name" value="Aminotransferase"/>
    <property type="match status" value="1"/>
</dbReference>
<dbReference type="Gene3D" id="3.90.1150.10">
    <property type="entry name" value="Aspartate Aminotransferase, domain 1"/>
    <property type="match status" value="1"/>
</dbReference>
<dbReference type="Gene3D" id="3.40.640.10">
    <property type="entry name" value="Type I PLP-dependent aspartate aminotransferase-like (Major domain)"/>
    <property type="match status" value="1"/>
</dbReference>
<dbReference type="InterPro" id="IPR004839">
    <property type="entry name" value="Aminotransferase_I/II_large"/>
</dbReference>
<dbReference type="InterPro" id="IPR050881">
    <property type="entry name" value="LL-DAP_aminotransferase"/>
</dbReference>
<dbReference type="InterPro" id="IPR004838">
    <property type="entry name" value="NHTrfase_class1_PyrdxlP-BS"/>
</dbReference>
<dbReference type="InterPro" id="IPR015424">
    <property type="entry name" value="PyrdxlP-dep_Trfase"/>
</dbReference>
<dbReference type="InterPro" id="IPR015421">
    <property type="entry name" value="PyrdxlP-dep_Trfase_major"/>
</dbReference>
<dbReference type="InterPro" id="IPR015422">
    <property type="entry name" value="PyrdxlP-dep_Trfase_small"/>
</dbReference>
<dbReference type="NCBIfam" id="NF005977">
    <property type="entry name" value="PRK08068.1"/>
    <property type="match status" value="1"/>
</dbReference>
<dbReference type="PANTHER" id="PTHR42832">
    <property type="entry name" value="AMINO ACID AMINOTRANSFERASE"/>
    <property type="match status" value="1"/>
</dbReference>
<dbReference type="PANTHER" id="PTHR42832:SF3">
    <property type="entry name" value="L-GLUTAMINE--4-(METHYLSULFANYL)-2-OXOBUTANOATE AMINOTRANSFERASE"/>
    <property type="match status" value="1"/>
</dbReference>
<dbReference type="Pfam" id="PF00155">
    <property type="entry name" value="Aminotran_1_2"/>
    <property type="match status" value="1"/>
</dbReference>
<dbReference type="SUPFAM" id="SSF53383">
    <property type="entry name" value="PLP-dependent transferases"/>
    <property type="match status" value="1"/>
</dbReference>
<dbReference type="PROSITE" id="PS00105">
    <property type="entry name" value="AA_TRANSFER_CLASS_1"/>
    <property type="match status" value="1"/>
</dbReference>
<reference key="1">
    <citation type="journal article" date="1993" name="Mol. Microbiol.">
        <title>Bacillus subtilis genome project: cloning and sequencing of the 97 kb region from 325 degrees to 333 degrees.</title>
        <authorList>
            <person name="Glaser P."/>
            <person name="Kunst F."/>
            <person name="Arnaud M."/>
            <person name="Coudart M.P."/>
            <person name="Gonzales W."/>
            <person name="Hullo M.-F."/>
            <person name="Ionescu M."/>
            <person name="Lubochinsky B."/>
            <person name="Marcelino L."/>
            <person name="Moszer I."/>
            <person name="Presecan E."/>
            <person name="Santana M."/>
            <person name="Schneider E."/>
            <person name="Schweizer J."/>
            <person name="Vertes A."/>
            <person name="Rapoport G."/>
            <person name="Danchin A."/>
        </authorList>
    </citation>
    <scope>NUCLEOTIDE SEQUENCE [GENOMIC DNA]</scope>
    <source>
        <strain>168</strain>
    </source>
</reference>
<reference key="2">
    <citation type="journal article" date="1997" name="Nature">
        <title>The complete genome sequence of the Gram-positive bacterium Bacillus subtilis.</title>
        <authorList>
            <person name="Kunst F."/>
            <person name="Ogasawara N."/>
            <person name="Moszer I."/>
            <person name="Albertini A.M."/>
            <person name="Alloni G."/>
            <person name="Azevedo V."/>
            <person name="Bertero M.G."/>
            <person name="Bessieres P."/>
            <person name="Bolotin A."/>
            <person name="Borchert S."/>
            <person name="Borriss R."/>
            <person name="Boursier L."/>
            <person name="Brans A."/>
            <person name="Braun M."/>
            <person name="Brignell S.C."/>
            <person name="Bron S."/>
            <person name="Brouillet S."/>
            <person name="Bruschi C.V."/>
            <person name="Caldwell B."/>
            <person name="Capuano V."/>
            <person name="Carter N.M."/>
            <person name="Choi S.-K."/>
            <person name="Codani J.-J."/>
            <person name="Connerton I.F."/>
            <person name="Cummings N.J."/>
            <person name="Daniel R.A."/>
            <person name="Denizot F."/>
            <person name="Devine K.M."/>
            <person name="Duesterhoeft A."/>
            <person name="Ehrlich S.D."/>
            <person name="Emmerson P.T."/>
            <person name="Entian K.-D."/>
            <person name="Errington J."/>
            <person name="Fabret C."/>
            <person name="Ferrari E."/>
            <person name="Foulger D."/>
            <person name="Fritz C."/>
            <person name="Fujita M."/>
            <person name="Fujita Y."/>
            <person name="Fuma S."/>
            <person name="Galizzi A."/>
            <person name="Galleron N."/>
            <person name="Ghim S.-Y."/>
            <person name="Glaser P."/>
            <person name="Goffeau A."/>
            <person name="Golightly E.J."/>
            <person name="Grandi G."/>
            <person name="Guiseppi G."/>
            <person name="Guy B.J."/>
            <person name="Haga K."/>
            <person name="Haiech J."/>
            <person name="Harwood C.R."/>
            <person name="Henaut A."/>
            <person name="Hilbert H."/>
            <person name="Holsappel S."/>
            <person name="Hosono S."/>
            <person name="Hullo M.-F."/>
            <person name="Itaya M."/>
            <person name="Jones L.-M."/>
            <person name="Joris B."/>
            <person name="Karamata D."/>
            <person name="Kasahara Y."/>
            <person name="Klaerr-Blanchard M."/>
            <person name="Klein C."/>
            <person name="Kobayashi Y."/>
            <person name="Koetter P."/>
            <person name="Koningstein G."/>
            <person name="Krogh S."/>
            <person name="Kumano M."/>
            <person name="Kurita K."/>
            <person name="Lapidus A."/>
            <person name="Lardinois S."/>
            <person name="Lauber J."/>
            <person name="Lazarevic V."/>
            <person name="Lee S.-M."/>
            <person name="Levine A."/>
            <person name="Liu H."/>
            <person name="Masuda S."/>
            <person name="Mauel C."/>
            <person name="Medigue C."/>
            <person name="Medina N."/>
            <person name="Mellado R.P."/>
            <person name="Mizuno M."/>
            <person name="Moestl D."/>
            <person name="Nakai S."/>
            <person name="Noback M."/>
            <person name="Noone D."/>
            <person name="O'Reilly M."/>
            <person name="Ogawa K."/>
            <person name="Ogiwara A."/>
            <person name="Oudega B."/>
            <person name="Park S.-H."/>
            <person name="Parro V."/>
            <person name="Pohl T.M."/>
            <person name="Portetelle D."/>
            <person name="Porwollik S."/>
            <person name="Prescott A.M."/>
            <person name="Presecan E."/>
            <person name="Pujic P."/>
            <person name="Purnelle B."/>
            <person name="Rapoport G."/>
            <person name="Rey M."/>
            <person name="Reynolds S."/>
            <person name="Rieger M."/>
            <person name="Rivolta C."/>
            <person name="Rocha E."/>
            <person name="Roche B."/>
            <person name="Rose M."/>
            <person name="Sadaie Y."/>
            <person name="Sato T."/>
            <person name="Scanlan E."/>
            <person name="Schleich S."/>
            <person name="Schroeter R."/>
            <person name="Scoffone F."/>
            <person name="Sekiguchi J."/>
            <person name="Sekowska A."/>
            <person name="Seror S.J."/>
            <person name="Serror P."/>
            <person name="Shin B.-S."/>
            <person name="Soldo B."/>
            <person name="Sorokin A."/>
            <person name="Tacconi E."/>
            <person name="Takagi T."/>
            <person name="Takahashi H."/>
            <person name="Takemaru K."/>
            <person name="Takeuchi M."/>
            <person name="Tamakoshi A."/>
            <person name="Tanaka T."/>
            <person name="Terpstra P."/>
            <person name="Tognoni A."/>
            <person name="Tosato V."/>
            <person name="Uchiyama S."/>
            <person name="Vandenbol M."/>
            <person name="Vannier F."/>
            <person name="Vassarotti A."/>
            <person name="Viari A."/>
            <person name="Wambutt R."/>
            <person name="Wedler E."/>
            <person name="Wedler H."/>
            <person name="Weitzenegger T."/>
            <person name="Winters P."/>
            <person name="Wipat A."/>
            <person name="Yamamoto H."/>
            <person name="Yamane K."/>
            <person name="Yasumoto K."/>
            <person name="Yata K."/>
            <person name="Yoshida K."/>
            <person name="Yoshikawa H.-F."/>
            <person name="Zumstein E."/>
            <person name="Yoshikawa H."/>
            <person name="Danchin A."/>
        </authorList>
    </citation>
    <scope>NUCLEOTIDE SEQUENCE [LARGE SCALE GENOMIC DNA]</scope>
    <source>
        <strain>168</strain>
    </source>
</reference>
<reference key="3">
    <citation type="journal article" date="2003" name="J. Biol. Chem.">
        <title>Guanine nucleotides guanosine 5'-diphosphate 3'-diphosphate and GTP co-operatively regulate the production of an antibiotic bacilysin in Bacillus subtilis.</title>
        <authorList>
            <person name="Inaoka T."/>
            <person name="Takahashi K."/>
            <person name="Ohnishi-Kameyama M."/>
            <person name="Yoshida M."/>
            <person name="Ochi K."/>
        </authorList>
    </citation>
    <scope>INDUCTION</scope>
    <scope>PATHWAY</scope>
    <source>
        <strain>168 / 61884</strain>
    </source>
</reference>
<reference key="4">
    <citation type="journal article" date="2010" name="Biochemistry">
        <title>Investigation of anticapsin biosynthesis reveals a four-enzyme pathway to tetrahydrotyrosine in Bacillus subtilis.</title>
        <authorList>
            <person name="Mahlstedt S.A."/>
            <person name="Walsh C.T."/>
        </authorList>
    </citation>
    <scope>FUNCTION</scope>
    <scope>CATALYTIC ACTIVITY</scope>
    <scope>PATHWAY</scope>
</reference>
<reference key="5">
    <citation type="journal article" date="2012" name="Biochemistry">
        <title>Stereochemical outcome at four stereogenic centers during conversion of prephenate to tetrahydrotyrosine by BacABGF in the bacilysin pathway.</title>
        <authorList>
            <person name="Parker J.B."/>
            <person name="Walsh C.T."/>
        </authorList>
    </citation>
    <scope>FUNCTION</scope>
    <scope>CATALYTIC ACTIVITY</scope>
    <scope>PATHWAY</scope>
    <scope>SUBSTRATE SPECIFICITY</scope>
</reference>
<sequence length="399" mass="44703">MEITPSDVIKTLPRQEFSLVFQKVKEMEKTGAHIINLGQGNPDLPTPPHIVEALREASLNPSFHGYGPFRGYPFLKEAIAAFYKREYGVTINPETEVALFGGGKAGLYVLTQCLLNPGDIALVPNPGYPEYLSGITMARAELYEMPLYEENGYLPDFEKIDPAVLEKAKLMFLNYPNNPTGAVADAAFYAKAAAFAKEHNIHLIHDFAYGAFEFDQKPASFLEAEDAKTVGAELYSFSKTFNMAGWRMAFAVGNEKIIQAVNEFQDHVFVGMFGGLQQAASAALSGDPEHTESLKRIYKERIDFFTALCEKELGWKMEKPKGTFYVWAEIPNTFETSHQFSDYLLEHAHVVVTPGEIFGSNGKRHVRISMVSKQEDLREFVTRIQKLNLPFGSLQETSR</sequence>
<comment type="function">
    <text evidence="3 4">Part of the bacABCDEF operon responsible for the biosynthesis of the nonribosomally synthesized dipeptide antibiotic bacilysin, composed of L-alanine and L-anticapsin. Bacilysin is an irreversible inactivator of the glutaminase domain of glucosamine synthetase (PubMed:20052993). Catalyzes the reductive amination of the C2 ketone of tetrahydro-hydroxyphenylpyruvate (H4HPP), with L-Phe as an amino donor, to yield tetrahydrotyrosine (H4Tyr) diastereomer (PubMed:22765234). D-Phe is not an effective amino donor (PubMed:22765234). BacF associated to BacG converts 3E,7R- and 3Z,7R-ex-H2HPP to 2S,4R,7R- and 2S,4S,7R-H4Tyr, respectively. Given that bacilysin has the 2S,4S stereochemistry in its anticapsin moiety, it is likely that the 2S,4S-H4Tyr is the diastereomer used for the biosynthesis (PubMed:22765234).</text>
</comment>
<comment type="cofactor">
    <cofactor evidence="1">
        <name>pyridoxal 5'-phosphate</name>
        <dbReference type="ChEBI" id="CHEBI:597326"/>
    </cofactor>
</comment>
<comment type="pathway">
    <text evidence="8 9 10">Antibiotic biosynthesis; bacilysin biosynthesis.</text>
</comment>
<comment type="subunit">
    <text evidence="1">Homodimer.</text>
</comment>
<comment type="subcellular location">
    <subcellularLocation>
        <location evidence="7">Cytoplasm</location>
    </subcellularLocation>
</comment>
<comment type="induction">
    <text evidence="2">The compound guanosine 5'-diphosphate 3'-diphosphate (ppGpp) is essential for the transcription of the bacABCDEF operon and BacG, and GTP regulates the transcription of both this operon and ywfH via the CodY-mediated regulation system.</text>
</comment>
<comment type="similarity">
    <text evidence="7">Belongs to the class-I pyridoxal-phosphate-dependent aminotransferase family.</text>
</comment>
<feature type="chain" id="PRO_0000123837" description="Transaminase BacF">
    <location>
        <begin position="1"/>
        <end position="399"/>
    </location>
</feature>
<feature type="binding site" evidence="1">
    <location>
        <begin position="103"/>
        <end position="104"/>
    </location>
    <ligand>
        <name>pyridoxal 5'-phosphate</name>
        <dbReference type="ChEBI" id="CHEBI:597326"/>
    </ligand>
</feature>
<feature type="binding site" evidence="1">
    <location>
        <position position="128"/>
    </location>
    <ligand>
        <name>pyridoxal 5'-phosphate</name>
        <dbReference type="ChEBI" id="CHEBI:597326"/>
    </ligand>
</feature>
<feature type="binding site" evidence="1">
    <location>
        <position position="178"/>
    </location>
    <ligand>
        <name>pyridoxal 5'-phosphate</name>
        <dbReference type="ChEBI" id="CHEBI:597326"/>
    </ligand>
</feature>
<feature type="binding site" evidence="1">
    <location>
        <position position="209"/>
    </location>
    <ligand>
        <name>pyridoxal 5'-phosphate</name>
        <dbReference type="ChEBI" id="CHEBI:597326"/>
    </ligand>
</feature>
<feature type="binding site" evidence="1">
    <location>
        <begin position="236"/>
        <end position="238"/>
    </location>
    <ligand>
        <name>pyridoxal 5'-phosphate</name>
        <dbReference type="ChEBI" id="CHEBI:597326"/>
    </ligand>
</feature>
<feature type="binding site" evidence="1">
    <location>
        <position position="247"/>
    </location>
    <ligand>
        <name>pyridoxal 5'-phosphate</name>
        <dbReference type="ChEBI" id="CHEBI:597326"/>
    </ligand>
</feature>
<feature type="modified residue" description="N6-(pyridoxal phosphate)lysine" evidence="1">
    <location>
        <position position="239"/>
    </location>
</feature>
<feature type="helix" evidence="11">
    <location>
        <begin position="6"/>
        <end position="10"/>
    </location>
</feature>
<feature type="helix" evidence="11">
    <location>
        <begin position="17"/>
        <end position="28"/>
    </location>
</feature>
<feature type="helix" evidence="11">
    <location>
        <begin position="48"/>
        <end position="57"/>
    </location>
</feature>
<feature type="helix" evidence="11">
    <location>
        <begin position="61"/>
        <end position="63"/>
    </location>
</feature>
<feature type="helix" evidence="11">
    <location>
        <begin position="73"/>
        <end position="87"/>
    </location>
</feature>
<feature type="turn" evidence="11">
    <location>
        <begin position="93"/>
        <end position="95"/>
    </location>
</feature>
<feature type="strand" evidence="11">
    <location>
        <begin position="96"/>
        <end position="102"/>
    </location>
</feature>
<feature type="helix" evidence="11">
    <location>
        <begin position="103"/>
        <end position="114"/>
    </location>
</feature>
<feature type="strand" evidence="11">
    <location>
        <begin position="120"/>
        <end position="126"/>
    </location>
</feature>
<feature type="helix" evidence="11">
    <location>
        <begin position="130"/>
        <end position="137"/>
    </location>
</feature>
<feature type="strand" evidence="11">
    <location>
        <begin position="141"/>
        <end position="146"/>
    </location>
</feature>
<feature type="helix" evidence="11">
    <location>
        <begin position="149"/>
        <end position="151"/>
    </location>
</feature>
<feature type="helix" evidence="11">
    <location>
        <begin position="157"/>
        <end position="159"/>
    </location>
</feature>
<feature type="turn" evidence="11">
    <location>
        <begin position="162"/>
        <end position="167"/>
    </location>
</feature>
<feature type="strand" evidence="11">
    <location>
        <begin position="168"/>
        <end position="173"/>
    </location>
</feature>
<feature type="turn" evidence="11">
    <location>
        <begin position="178"/>
        <end position="180"/>
    </location>
</feature>
<feature type="helix" evidence="11">
    <location>
        <begin position="186"/>
        <end position="198"/>
    </location>
</feature>
<feature type="strand" evidence="11">
    <location>
        <begin position="202"/>
        <end position="206"/>
    </location>
</feature>
<feature type="turn" evidence="11">
    <location>
        <begin position="208"/>
        <end position="211"/>
    </location>
</feature>
<feature type="strand" evidence="11">
    <location>
        <begin position="213"/>
        <end position="216"/>
    </location>
</feature>
<feature type="helix" evidence="11">
    <location>
        <begin position="221"/>
        <end position="223"/>
    </location>
</feature>
<feature type="helix" evidence="11">
    <location>
        <begin position="227"/>
        <end position="230"/>
    </location>
</feature>
<feature type="strand" evidence="11">
    <location>
        <begin position="231"/>
        <end position="237"/>
    </location>
</feature>
<feature type="turn" evidence="11">
    <location>
        <begin position="238"/>
        <end position="242"/>
    </location>
</feature>
<feature type="helix" evidence="11">
    <location>
        <begin position="244"/>
        <end position="246"/>
    </location>
</feature>
<feature type="strand" evidence="11">
    <location>
        <begin position="249"/>
        <end position="253"/>
    </location>
</feature>
<feature type="helix" evidence="11">
    <location>
        <begin position="255"/>
        <end position="268"/>
    </location>
</feature>
<feature type="helix" evidence="11">
    <location>
        <begin position="274"/>
        <end position="285"/>
    </location>
</feature>
<feature type="helix" evidence="11">
    <location>
        <begin position="289"/>
        <end position="313"/>
    </location>
</feature>
<feature type="strand" evidence="11">
    <location>
        <begin position="321"/>
        <end position="329"/>
    </location>
</feature>
<feature type="helix" evidence="11">
    <location>
        <begin position="337"/>
        <end position="347"/>
    </location>
</feature>
<feature type="helix" evidence="11">
    <location>
        <begin position="355"/>
        <end position="358"/>
    </location>
</feature>
<feature type="helix" evidence="11">
    <location>
        <begin position="360"/>
        <end position="362"/>
    </location>
</feature>
<feature type="strand" evidence="11">
    <location>
        <begin position="365"/>
        <end position="369"/>
    </location>
</feature>
<feature type="helix" evidence="11">
    <location>
        <begin position="374"/>
        <end position="385"/>
    </location>
</feature>
<protein>
    <recommendedName>
        <fullName evidence="5">Transaminase BacF</fullName>
        <ecNumber evidence="3 4">2.6.1.-</ecNumber>
    </recommendedName>
    <alternativeName>
        <fullName>Transaminase A</fullName>
    </alternativeName>
</protein>
<keyword id="KW-0002">3D-structure</keyword>
<keyword id="KW-0032">Aminotransferase</keyword>
<keyword id="KW-0045">Antibiotic biosynthesis</keyword>
<keyword id="KW-0963">Cytoplasm</keyword>
<keyword id="KW-0663">Pyridoxal phosphate</keyword>
<keyword id="KW-1185">Reference proteome</keyword>
<keyword id="KW-0808">Transferase</keyword>
<accession>P39643</accession>
<organism>
    <name type="scientific">Bacillus subtilis (strain 168)</name>
    <dbReference type="NCBI Taxonomy" id="224308"/>
    <lineage>
        <taxon>Bacteria</taxon>
        <taxon>Bacillati</taxon>
        <taxon>Bacillota</taxon>
        <taxon>Bacilli</taxon>
        <taxon>Bacillales</taxon>
        <taxon>Bacillaceae</taxon>
        <taxon>Bacillus</taxon>
    </lineage>
</organism>
<evidence type="ECO:0000250" key="1">
    <source>
        <dbReference type="UniProtKB" id="Q93ZN9"/>
    </source>
</evidence>
<evidence type="ECO:0000269" key="2">
    <source>
    </source>
</evidence>
<evidence type="ECO:0000269" key="3">
    <source>
    </source>
</evidence>
<evidence type="ECO:0000269" key="4">
    <source>
    </source>
</evidence>
<evidence type="ECO:0000303" key="5">
    <source>
    </source>
</evidence>
<evidence type="ECO:0000303" key="6">
    <source>
    </source>
</evidence>
<evidence type="ECO:0000305" key="7"/>
<evidence type="ECO:0000305" key="8">
    <source>
    </source>
</evidence>
<evidence type="ECO:0000305" key="9">
    <source>
    </source>
</evidence>
<evidence type="ECO:0000305" key="10">
    <source>
    </source>
</evidence>
<evidence type="ECO:0007829" key="11">
    <source>
        <dbReference type="PDB" id="6L1L"/>
    </source>
</evidence>
<proteinExistence type="evidence at protein level"/>
<name>BACF_BACSU</name>
<gene>
    <name evidence="6" type="primary">bacF</name>
    <name evidence="5" type="synonym">ywfG</name>
    <name type="ordered locus">BSU37690</name>
    <name type="ORF">ipa-85d</name>
</gene>